<proteinExistence type="inferred from homology"/>
<keyword id="KW-0479">Metal-binding</keyword>
<keyword id="KW-0520">NAD</keyword>
<keyword id="KW-0521">NADP</keyword>
<keyword id="KW-0558">Oxidation</keyword>
<keyword id="KW-0560">Oxidoreductase</keyword>
<keyword id="KW-0630">Potassium</keyword>
<protein>
    <recommendedName>
        <fullName evidence="1">Betaine aldehyde dehydrogenase</fullName>
        <shortName evidence="1">BADH</shortName>
        <ecNumber evidence="1">1.2.1.8</ecNumber>
    </recommendedName>
</protein>
<comment type="function">
    <text evidence="1">Involved in the biosynthesis of the osmoprotectant glycine betaine. Catalyzes the irreversible oxidation of betaine aldehyde to the corresponding acid.</text>
</comment>
<comment type="catalytic activity">
    <reaction evidence="1">
        <text>betaine aldehyde + NAD(+) + H2O = glycine betaine + NADH + 2 H(+)</text>
        <dbReference type="Rhea" id="RHEA:15305"/>
        <dbReference type="ChEBI" id="CHEBI:15377"/>
        <dbReference type="ChEBI" id="CHEBI:15378"/>
        <dbReference type="ChEBI" id="CHEBI:15710"/>
        <dbReference type="ChEBI" id="CHEBI:17750"/>
        <dbReference type="ChEBI" id="CHEBI:57540"/>
        <dbReference type="ChEBI" id="CHEBI:57945"/>
        <dbReference type="EC" id="1.2.1.8"/>
    </reaction>
    <physiologicalReaction direction="left-to-right" evidence="1">
        <dbReference type="Rhea" id="RHEA:15306"/>
    </physiologicalReaction>
</comment>
<comment type="cofactor">
    <cofactor evidence="1">
        <name>K(+)</name>
        <dbReference type="ChEBI" id="CHEBI:29103"/>
    </cofactor>
    <text evidence="1">Binds 2 potassium ions per subunit.</text>
</comment>
<comment type="pathway">
    <text evidence="1">Amine and polyamine biosynthesis; betaine biosynthesis via choline pathway; betaine from betaine aldehyde: step 1/1.</text>
</comment>
<comment type="subunit">
    <text evidence="1">Dimer of dimers.</text>
</comment>
<comment type="similarity">
    <text evidence="1">Belongs to the aldehyde dehydrogenase family.</text>
</comment>
<accession>A6W2P7</accession>
<feature type="chain" id="PRO_1000083709" description="Betaine aldehyde dehydrogenase">
    <location>
        <begin position="1"/>
        <end position="485"/>
    </location>
</feature>
<feature type="active site" description="Charge relay system" evidence="1">
    <location>
        <position position="159"/>
    </location>
</feature>
<feature type="active site" description="Proton acceptor" evidence="1">
    <location>
        <position position="247"/>
    </location>
</feature>
<feature type="active site" description="Nucleophile" evidence="1">
    <location>
        <position position="281"/>
    </location>
</feature>
<feature type="active site" description="Charge relay system" evidence="1">
    <location>
        <position position="459"/>
    </location>
</feature>
<feature type="binding site" evidence="1">
    <location>
        <position position="23"/>
    </location>
    <ligand>
        <name>K(+)</name>
        <dbReference type="ChEBI" id="CHEBI:29103"/>
        <label>1</label>
    </ligand>
</feature>
<feature type="binding site" evidence="1">
    <location>
        <position position="24"/>
    </location>
    <ligand>
        <name>K(+)</name>
        <dbReference type="ChEBI" id="CHEBI:29103"/>
        <label>1</label>
    </ligand>
</feature>
<feature type="binding site" evidence="1">
    <location>
        <position position="90"/>
    </location>
    <ligand>
        <name>K(+)</name>
        <dbReference type="ChEBI" id="CHEBI:29103"/>
        <label>1</label>
    </ligand>
</feature>
<feature type="binding site" evidence="1">
    <location>
        <begin position="147"/>
        <end position="149"/>
    </location>
    <ligand>
        <name>NAD(+)</name>
        <dbReference type="ChEBI" id="CHEBI:57540"/>
    </ligand>
</feature>
<feature type="binding site" evidence="1">
    <location>
        <begin position="173"/>
        <end position="176"/>
    </location>
    <ligand>
        <name>NAD(+)</name>
        <dbReference type="ChEBI" id="CHEBI:57540"/>
    </ligand>
</feature>
<feature type="binding site" evidence="1">
    <location>
        <begin position="226"/>
        <end position="229"/>
    </location>
    <ligand>
        <name>NAD(+)</name>
        <dbReference type="ChEBI" id="CHEBI:57540"/>
    </ligand>
</feature>
<feature type="binding site" evidence="1">
    <location>
        <position position="241"/>
    </location>
    <ligand>
        <name>K(+)</name>
        <dbReference type="ChEBI" id="CHEBI:29103"/>
        <label>2</label>
    </ligand>
</feature>
<feature type="binding site" evidence="1">
    <location>
        <position position="249"/>
    </location>
    <ligand>
        <name>NAD(+)</name>
        <dbReference type="ChEBI" id="CHEBI:57540"/>
    </ligand>
</feature>
<feature type="binding site" description="covalent" evidence="1">
    <location>
        <position position="281"/>
    </location>
    <ligand>
        <name>NAD(+)</name>
        <dbReference type="ChEBI" id="CHEBI:57540"/>
    </ligand>
</feature>
<feature type="binding site" evidence="1">
    <location>
        <position position="382"/>
    </location>
    <ligand>
        <name>NAD(+)</name>
        <dbReference type="ChEBI" id="CHEBI:57540"/>
    </ligand>
</feature>
<feature type="binding site" evidence="1">
    <location>
        <position position="452"/>
    </location>
    <ligand>
        <name>K(+)</name>
        <dbReference type="ChEBI" id="CHEBI:29103"/>
        <label>2</label>
    </ligand>
</feature>
<feature type="binding site" evidence="1">
    <location>
        <position position="455"/>
    </location>
    <ligand>
        <name>K(+)</name>
        <dbReference type="ChEBI" id="CHEBI:29103"/>
        <label>2</label>
    </ligand>
</feature>
<feature type="modified residue" description="Cysteine sulfenic acid (-SOH)" evidence="1">
    <location>
        <position position="281"/>
    </location>
</feature>
<name>BETB_MARMS</name>
<dbReference type="EC" id="1.2.1.8" evidence="1"/>
<dbReference type="EMBL" id="CP000749">
    <property type="protein sequence ID" value="ABR72976.1"/>
    <property type="molecule type" value="Genomic_DNA"/>
</dbReference>
<dbReference type="SMR" id="A6W2P7"/>
<dbReference type="STRING" id="400668.Mmwyl1_4080"/>
<dbReference type="KEGG" id="mmw:Mmwyl1_4080"/>
<dbReference type="eggNOG" id="COG1012">
    <property type="taxonomic scope" value="Bacteria"/>
</dbReference>
<dbReference type="HOGENOM" id="CLU_005391_0_0_6"/>
<dbReference type="OrthoDB" id="9812625at2"/>
<dbReference type="UniPathway" id="UPA00529">
    <property type="reaction ID" value="UER00386"/>
</dbReference>
<dbReference type="GO" id="GO:0008802">
    <property type="term" value="F:betaine-aldehyde dehydrogenase (NAD+) activity"/>
    <property type="evidence" value="ECO:0007669"/>
    <property type="project" value="UniProtKB-UniRule"/>
</dbReference>
<dbReference type="GO" id="GO:0046872">
    <property type="term" value="F:metal ion binding"/>
    <property type="evidence" value="ECO:0007669"/>
    <property type="project" value="UniProtKB-KW"/>
</dbReference>
<dbReference type="GO" id="GO:0019285">
    <property type="term" value="P:glycine betaine biosynthetic process from choline"/>
    <property type="evidence" value="ECO:0007669"/>
    <property type="project" value="UniProtKB-UniRule"/>
</dbReference>
<dbReference type="CDD" id="cd07090">
    <property type="entry name" value="ALDH_F9_TMBADH"/>
    <property type="match status" value="1"/>
</dbReference>
<dbReference type="FunFam" id="3.40.605.10:FF:000026">
    <property type="entry name" value="Aldehyde dehydrogenase, putative"/>
    <property type="match status" value="1"/>
</dbReference>
<dbReference type="FunFam" id="3.40.309.10:FF:000014">
    <property type="entry name" value="NAD/NADP-dependent betaine aldehyde dehydrogenase"/>
    <property type="match status" value="1"/>
</dbReference>
<dbReference type="FunFam" id="3.40.605.10:FF:000007">
    <property type="entry name" value="NAD/NADP-dependent betaine aldehyde dehydrogenase"/>
    <property type="match status" value="1"/>
</dbReference>
<dbReference type="Gene3D" id="3.40.605.10">
    <property type="entry name" value="Aldehyde Dehydrogenase, Chain A, domain 1"/>
    <property type="match status" value="1"/>
</dbReference>
<dbReference type="Gene3D" id="3.40.309.10">
    <property type="entry name" value="Aldehyde Dehydrogenase, Chain A, domain 2"/>
    <property type="match status" value="1"/>
</dbReference>
<dbReference type="HAMAP" id="MF_00804">
    <property type="entry name" value="BADH"/>
    <property type="match status" value="1"/>
</dbReference>
<dbReference type="InterPro" id="IPR016161">
    <property type="entry name" value="Ald_DH/histidinol_DH"/>
</dbReference>
<dbReference type="InterPro" id="IPR016163">
    <property type="entry name" value="Ald_DH_C"/>
</dbReference>
<dbReference type="InterPro" id="IPR016160">
    <property type="entry name" value="Ald_DH_CS_CYS"/>
</dbReference>
<dbReference type="InterPro" id="IPR029510">
    <property type="entry name" value="Ald_DH_CS_GLU"/>
</dbReference>
<dbReference type="InterPro" id="IPR016162">
    <property type="entry name" value="Ald_DH_N"/>
</dbReference>
<dbReference type="InterPro" id="IPR015590">
    <property type="entry name" value="Aldehyde_DH_dom"/>
</dbReference>
<dbReference type="InterPro" id="IPR011264">
    <property type="entry name" value="BADH"/>
</dbReference>
<dbReference type="NCBIfam" id="TIGR01804">
    <property type="entry name" value="BADH"/>
    <property type="match status" value="1"/>
</dbReference>
<dbReference type="NCBIfam" id="NF009725">
    <property type="entry name" value="PRK13252.1"/>
    <property type="match status" value="1"/>
</dbReference>
<dbReference type="PANTHER" id="PTHR11699">
    <property type="entry name" value="ALDEHYDE DEHYDROGENASE-RELATED"/>
    <property type="match status" value="1"/>
</dbReference>
<dbReference type="Pfam" id="PF00171">
    <property type="entry name" value="Aldedh"/>
    <property type="match status" value="1"/>
</dbReference>
<dbReference type="SUPFAM" id="SSF53720">
    <property type="entry name" value="ALDH-like"/>
    <property type="match status" value="1"/>
</dbReference>
<dbReference type="PROSITE" id="PS00070">
    <property type="entry name" value="ALDEHYDE_DEHYDR_CYS"/>
    <property type="match status" value="1"/>
</dbReference>
<dbReference type="PROSITE" id="PS00687">
    <property type="entry name" value="ALDEHYDE_DEHYDR_GLU"/>
    <property type="match status" value="1"/>
</dbReference>
<gene>
    <name evidence="1" type="primary">betB</name>
    <name type="ordered locus">Mmwyl1_4080</name>
</gene>
<organism>
    <name type="scientific">Marinomonas sp. (strain MWYL1)</name>
    <dbReference type="NCBI Taxonomy" id="400668"/>
    <lineage>
        <taxon>Bacteria</taxon>
        <taxon>Pseudomonadati</taxon>
        <taxon>Pseudomonadota</taxon>
        <taxon>Gammaproteobacteria</taxon>
        <taxon>Oceanospirillales</taxon>
        <taxon>Oceanospirillaceae</taxon>
        <taxon>Marinomonas</taxon>
    </lineage>
</organism>
<evidence type="ECO:0000255" key="1">
    <source>
        <dbReference type="HAMAP-Rule" id="MF_00804"/>
    </source>
</evidence>
<sequence length="485" mass="52554">MAHQQQYIHGRYHASTSGEHFETINPATGEVIATVEHAGQAELDAAVESAKQGQKVWSAMSPVERGRILKKAAELLRENNEELARLEVLDTGKPLQEAIVVDIQTGADVIEYYAGLTDKIQGDYQDLGNGNFFYTRREPLGICAGIGAWNYPIQIAMWKSGPALAAGNAMIFKPSEETPLTALKLAEIFTEAGLPDGVFNVIQGDARTGQLITNHPDIDKVSFTGEVGTGKKVMAASAQSLKQVTMELGGKSPMIIFPDMPVDQAVSAAMLANFYTQGEVCTNGTRVFVHADMLDAFTKELKQRTEAMIIGDPMDMDTQVGALISKDHMQKVLGYIQAAKDAGATLLCGGYQVTENGLDKGAFVAPTVFTDCTDDMPQVRDEIFGPVMSVLSFTDEDEVIARANDTKLGLAAGVFTKDFARAHRVINQLQAGICWINSWGASPAEMPVGGYKQSGIGRENGIETLYHYTQNKSVFVDLNDIQSPY</sequence>
<reference key="1">
    <citation type="submission" date="2007-06" db="EMBL/GenBank/DDBJ databases">
        <title>Complete sequence of Marinomonas sp. MWYL1.</title>
        <authorList>
            <consortium name="US DOE Joint Genome Institute"/>
            <person name="Copeland A."/>
            <person name="Lucas S."/>
            <person name="Lapidus A."/>
            <person name="Barry K."/>
            <person name="Glavina del Rio T."/>
            <person name="Dalin E."/>
            <person name="Tice H."/>
            <person name="Pitluck S."/>
            <person name="Kiss H."/>
            <person name="Brettin T."/>
            <person name="Bruce D."/>
            <person name="Detter J.C."/>
            <person name="Han C."/>
            <person name="Schmutz J."/>
            <person name="Larimer F."/>
            <person name="Land M."/>
            <person name="Hauser L."/>
            <person name="Kyrpides N."/>
            <person name="Kim E."/>
            <person name="Johnston A.W.B."/>
            <person name="Todd J.D."/>
            <person name="Rogers R."/>
            <person name="Wexler M."/>
            <person name="Bond P.L."/>
            <person name="Li Y."/>
            <person name="Richardson P."/>
        </authorList>
    </citation>
    <scope>NUCLEOTIDE SEQUENCE [LARGE SCALE GENOMIC DNA]</scope>
    <source>
        <strain>MWYL1</strain>
    </source>
</reference>